<gene>
    <name evidence="1" type="primary">valS</name>
    <name type="ordered locus">GSU2045</name>
</gene>
<organism>
    <name type="scientific">Geobacter sulfurreducens (strain ATCC 51573 / DSM 12127 / PCA)</name>
    <dbReference type="NCBI Taxonomy" id="243231"/>
    <lineage>
        <taxon>Bacteria</taxon>
        <taxon>Pseudomonadati</taxon>
        <taxon>Thermodesulfobacteriota</taxon>
        <taxon>Desulfuromonadia</taxon>
        <taxon>Geobacterales</taxon>
        <taxon>Geobacteraceae</taxon>
        <taxon>Geobacter</taxon>
    </lineage>
</organism>
<protein>
    <recommendedName>
        <fullName evidence="1">Valine--tRNA ligase</fullName>
        <ecNumber evidence="1">6.1.1.9</ecNumber>
    </recommendedName>
    <alternativeName>
        <fullName evidence="1">Valyl-tRNA synthetase</fullName>
        <shortName evidence="1">ValRS</shortName>
    </alternativeName>
</protein>
<proteinExistence type="inferred from homology"/>
<evidence type="ECO:0000255" key="1">
    <source>
        <dbReference type="HAMAP-Rule" id="MF_02004"/>
    </source>
</evidence>
<dbReference type="EC" id="6.1.1.9" evidence="1"/>
<dbReference type="EMBL" id="AE017180">
    <property type="protein sequence ID" value="AAR35421.1"/>
    <property type="molecule type" value="Genomic_DNA"/>
</dbReference>
<dbReference type="RefSeq" id="NP_953094.1">
    <property type="nucleotide sequence ID" value="NC_002939.5"/>
</dbReference>
<dbReference type="RefSeq" id="WP_010942688.1">
    <property type="nucleotide sequence ID" value="NC_002939.5"/>
</dbReference>
<dbReference type="SMR" id="Q74BJ6"/>
<dbReference type="FunCoup" id="Q74BJ6">
    <property type="interactions" value="538"/>
</dbReference>
<dbReference type="STRING" id="243231.GSU2045"/>
<dbReference type="EnsemblBacteria" id="AAR35421">
    <property type="protein sequence ID" value="AAR35421"/>
    <property type="gene ID" value="GSU2045"/>
</dbReference>
<dbReference type="KEGG" id="gsu:GSU2045"/>
<dbReference type="PATRIC" id="fig|243231.5.peg.2081"/>
<dbReference type="eggNOG" id="COG0525">
    <property type="taxonomic scope" value="Bacteria"/>
</dbReference>
<dbReference type="HOGENOM" id="CLU_001493_0_2_7"/>
<dbReference type="InParanoid" id="Q74BJ6"/>
<dbReference type="OrthoDB" id="9810365at2"/>
<dbReference type="Proteomes" id="UP000000577">
    <property type="component" value="Chromosome"/>
</dbReference>
<dbReference type="GO" id="GO:0005829">
    <property type="term" value="C:cytosol"/>
    <property type="evidence" value="ECO:0000318"/>
    <property type="project" value="GO_Central"/>
</dbReference>
<dbReference type="GO" id="GO:0002161">
    <property type="term" value="F:aminoacyl-tRNA deacylase activity"/>
    <property type="evidence" value="ECO:0007669"/>
    <property type="project" value="InterPro"/>
</dbReference>
<dbReference type="GO" id="GO:0005524">
    <property type="term" value="F:ATP binding"/>
    <property type="evidence" value="ECO:0007669"/>
    <property type="project" value="UniProtKB-UniRule"/>
</dbReference>
<dbReference type="GO" id="GO:0004832">
    <property type="term" value="F:valine-tRNA ligase activity"/>
    <property type="evidence" value="ECO:0000318"/>
    <property type="project" value="GO_Central"/>
</dbReference>
<dbReference type="GO" id="GO:0006438">
    <property type="term" value="P:valyl-tRNA aminoacylation"/>
    <property type="evidence" value="ECO:0000318"/>
    <property type="project" value="GO_Central"/>
</dbReference>
<dbReference type="CDD" id="cd07962">
    <property type="entry name" value="Anticodon_Ia_Val"/>
    <property type="match status" value="1"/>
</dbReference>
<dbReference type="CDD" id="cd00817">
    <property type="entry name" value="ValRS_core"/>
    <property type="match status" value="1"/>
</dbReference>
<dbReference type="FunFam" id="1.10.287.380:FF:000001">
    <property type="entry name" value="Valine--tRNA ligase"/>
    <property type="match status" value="1"/>
</dbReference>
<dbReference type="FunFam" id="1.10.730.10:FF:000014">
    <property type="entry name" value="Valine--tRNA ligase"/>
    <property type="match status" value="1"/>
</dbReference>
<dbReference type="FunFam" id="3.40.50.620:FF:000032">
    <property type="entry name" value="Valine--tRNA ligase"/>
    <property type="match status" value="1"/>
</dbReference>
<dbReference type="FunFam" id="3.40.50.620:FF:000098">
    <property type="entry name" value="Valine--tRNA ligase"/>
    <property type="match status" value="1"/>
</dbReference>
<dbReference type="FunFam" id="3.90.740.10:FF:000005">
    <property type="entry name" value="Valine--tRNA ligase, mitochondrial"/>
    <property type="match status" value="1"/>
</dbReference>
<dbReference type="Gene3D" id="3.40.50.620">
    <property type="entry name" value="HUPs"/>
    <property type="match status" value="2"/>
</dbReference>
<dbReference type="Gene3D" id="1.10.730.10">
    <property type="entry name" value="Isoleucyl-tRNA Synthetase, Domain 1"/>
    <property type="match status" value="1"/>
</dbReference>
<dbReference type="Gene3D" id="1.10.287.380">
    <property type="entry name" value="Valyl-tRNA synthetase, C-terminal domain"/>
    <property type="match status" value="1"/>
</dbReference>
<dbReference type="Gene3D" id="3.90.740.10">
    <property type="entry name" value="Valyl/Leucyl/Isoleucyl-tRNA synthetase, editing domain"/>
    <property type="match status" value="1"/>
</dbReference>
<dbReference type="HAMAP" id="MF_02004">
    <property type="entry name" value="Val_tRNA_synth_type1"/>
    <property type="match status" value="1"/>
</dbReference>
<dbReference type="InterPro" id="IPR001412">
    <property type="entry name" value="aa-tRNA-synth_I_CS"/>
</dbReference>
<dbReference type="InterPro" id="IPR002300">
    <property type="entry name" value="aa-tRNA-synth_Ia"/>
</dbReference>
<dbReference type="InterPro" id="IPR033705">
    <property type="entry name" value="Anticodon_Ia_Val"/>
</dbReference>
<dbReference type="InterPro" id="IPR013155">
    <property type="entry name" value="M/V/L/I-tRNA-synth_anticd-bd"/>
</dbReference>
<dbReference type="InterPro" id="IPR014729">
    <property type="entry name" value="Rossmann-like_a/b/a_fold"/>
</dbReference>
<dbReference type="InterPro" id="IPR010978">
    <property type="entry name" value="tRNA-bd_arm"/>
</dbReference>
<dbReference type="InterPro" id="IPR009080">
    <property type="entry name" value="tRNAsynth_Ia_anticodon-bd"/>
</dbReference>
<dbReference type="InterPro" id="IPR037118">
    <property type="entry name" value="Val-tRNA_synth_C_sf"/>
</dbReference>
<dbReference type="InterPro" id="IPR019499">
    <property type="entry name" value="Val-tRNA_synth_tRNA-bd"/>
</dbReference>
<dbReference type="InterPro" id="IPR009008">
    <property type="entry name" value="Val/Leu/Ile-tRNA-synth_edit"/>
</dbReference>
<dbReference type="InterPro" id="IPR002303">
    <property type="entry name" value="Valyl-tRNA_ligase"/>
</dbReference>
<dbReference type="NCBIfam" id="NF004349">
    <property type="entry name" value="PRK05729.1"/>
    <property type="match status" value="1"/>
</dbReference>
<dbReference type="NCBIfam" id="TIGR00422">
    <property type="entry name" value="valS"/>
    <property type="match status" value="1"/>
</dbReference>
<dbReference type="PANTHER" id="PTHR11946:SF93">
    <property type="entry name" value="VALINE--TRNA LIGASE, CHLOROPLASTIC_MITOCHONDRIAL 2"/>
    <property type="match status" value="1"/>
</dbReference>
<dbReference type="PANTHER" id="PTHR11946">
    <property type="entry name" value="VALYL-TRNA SYNTHETASES"/>
    <property type="match status" value="1"/>
</dbReference>
<dbReference type="Pfam" id="PF08264">
    <property type="entry name" value="Anticodon_1"/>
    <property type="match status" value="1"/>
</dbReference>
<dbReference type="Pfam" id="PF00133">
    <property type="entry name" value="tRNA-synt_1"/>
    <property type="match status" value="1"/>
</dbReference>
<dbReference type="Pfam" id="PF10458">
    <property type="entry name" value="Val_tRNA-synt_C"/>
    <property type="match status" value="1"/>
</dbReference>
<dbReference type="PRINTS" id="PR00986">
    <property type="entry name" value="TRNASYNTHVAL"/>
</dbReference>
<dbReference type="SUPFAM" id="SSF47323">
    <property type="entry name" value="Anticodon-binding domain of a subclass of class I aminoacyl-tRNA synthetases"/>
    <property type="match status" value="1"/>
</dbReference>
<dbReference type="SUPFAM" id="SSF52374">
    <property type="entry name" value="Nucleotidylyl transferase"/>
    <property type="match status" value="1"/>
</dbReference>
<dbReference type="SUPFAM" id="SSF46589">
    <property type="entry name" value="tRNA-binding arm"/>
    <property type="match status" value="1"/>
</dbReference>
<dbReference type="SUPFAM" id="SSF50677">
    <property type="entry name" value="ValRS/IleRS/LeuRS editing domain"/>
    <property type="match status" value="1"/>
</dbReference>
<dbReference type="PROSITE" id="PS00178">
    <property type="entry name" value="AA_TRNA_LIGASE_I"/>
    <property type="match status" value="1"/>
</dbReference>
<sequence>MAEKELAKVYEPTAVERKWYETWEQEGYFRANPDSGKPSYSIVIPPPNVTGALHMGHALNNTLQDILCRWKRMNGYEVLWMPGTDHAGIATQNVVERQLAGEGTSRHELGREAFIERVWKWKAESGGQIIGQLKRLGASCDWGRERFTMDEGLSRAVREVFVRLYEEGLIYRDNRLINWCPRCHTALSDIEVEHEDKAGNLWHIRYPVVGEPGRFVVVATTRPETMLGDTAVAVHPEDERYADLVGKKVLLPLVNREIPVVADGYVDREFGTGVVKITPAHDFNDFEVGRRHNLDLLNVFDESAVVNSAGHQYEGMERFAARKRVVEDLEALGLLEKIDDHAHAVGGCYRCKTVVEPYLSLQWYVKVGPLAERALAAVKDGRTRIVPQQWENTYYDWMENIKDWCISRQIWWGHRIPAWYCDHCGETTVAKIDPTVCAACGSDEIRQETDVLDTWFSSALWPFSTMGWPDRTPELAAFYPTSCLVTGFDILFFWVARMMMMGLHFMNEVPFSDVYIHALVRDAQGQKMSKSKGNVIDPLVVIDQYGTDAFRFTLAAFAAQGRDIKLAEERIAGYRNFVNKIWNASRFALMNLEGFEPDTVDPATLDLSNADRWILHRLNSAAAETAEALEAYRFNDAAGTLYRFTWSEFCDWYIELAKDDLYRGDDARKETARYVLWLVLENLLRLLHPFMPFITEEIWQTLPGARPAPSIMVAGYPRSVPERDFPDGAAEMELVMEVIRGIRNIRGEMDVAPSREIAAILSCGSAESLHLLKRNEVYVMSLARLSDLAIGQQLERPADAAIQVAGDVEIAVPLKGLVNVEEEEKRLLKEIGKLDKEIEMFGRKLENPSFVERAPADVVAKEREKLAEVTQKKDVLLASLEKIRKLA</sequence>
<name>SYV_GEOSL</name>
<comment type="function">
    <text evidence="1">Catalyzes the attachment of valine to tRNA(Val). As ValRS can inadvertently accommodate and process structurally similar amino acids such as threonine, to avoid such errors, it has a 'posttransfer' editing activity that hydrolyzes mischarged Thr-tRNA(Val) in a tRNA-dependent manner.</text>
</comment>
<comment type="catalytic activity">
    <reaction evidence="1">
        <text>tRNA(Val) + L-valine + ATP = L-valyl-tRNA(Val) + AMP + diphosphate</text>
        <dbReference type="Rhea" id="RHEA:10704"/>
        <dbReference type="Rhea" id="RHEA-COMP:9672"/>
        <dbReference type="Rhea" id="RHEA-COMP:9708"/>
        <dbReference type="ChEBI" id="CHEBI:30616"/>
        <dbReference type="ChEBI" id="CHEBI:33019"/>
        <dbReference type="ChEBI" id="CHEBI:57762"/>
        <dbReference type="ChEBI" id="CHEBI:78442"/>
        <dbReference type="ChEBI" id="CHEBI:78537"/>
        <dbReference type="ChEBI" id="CHEBI:456215"/>
        <dbReference type="EC" id="6.1.1.9"/>
    </reaction>
</comment>
<comment type="subunit">
    <text evidence="1">Monomer.</text>
</comment>
<comment type="subcellular location">
    <subcellularLocation>
        <location evidence="1">Cytoplasm</location>
    </subcellularLocation>
</comment>
<comment type="domain">
    <text evidence="1">ValRS has two distinct active sites: one for aminoacylation and one for editing. The misactivated threonine is translocated from the active site to the editing site.</text>
</comment>
<comment type="domain">
    <text evidence="1">The C-terminal coiled-coil domain is crucial for aminoacylation activity.</text>
</comment>
<comment type="similarity">
    <text evidence="1">Belongs to the class-I aminoacyl-tRNA synthetase family. ValS type 1 subfamily.</text>
</comment>
<keyword id="KW-0030">Aminoacyl-tRNA synthetase</keyword>
<keyword id="KW-0067">ATP-binding</keyword>
<keyword id="KW-0175">Coiled coil</keyword>
<keyword id="KW-0963">Cytoplasm</keyword>
<keyword id="KW-0436">Ligase</keyword>
<keyword id="KW-0547">Nucleotide-binding</keyword>
<keyword id="KW-0648">Protein biosynthesis</keyword>
<keyword id="KW-1185">Reference proteome</keyword>
<reference key="1">
    <citation type="journal article" date="2003" name="Science">
        <title>Genome of Geobacter sulfurreducens: metal reduction in subsurface environments.</title>
        <authorList>
            <person name="Methe B.A."/>
            <person name="Nelson K.E."/>
            <person name="Eisen J.A."/>
            <person name="Paulsen I.T."/>
            <person name="Nelson W.C."/>
            <person name="Heidelberg J.F."/>
            <person name="Wu D."/>
            <person name="Wu M."/>
            <person name="Ward N.L."/>
            <person name="Beanan M.J."/>
            <person name="Dodson R.J."/>
            <person name="Madupu R."/>
            <person name="Brinkac L.M."/>
            <person name="Daugherty S.C."/>
            <person name="DeBoy R.T."/>
            <person name="Durkin A.S."/>
            <person name="Gwinn M.L."/>
            <person name="Kolonay J.F."/>
            <person name="Sullivan S.A."/>
            <person name="Haft D.H."/>
            <person name="Selengut J."/>
            <person name="Davidsen T.M."/>
            <person name="Zafar N."/>
            <person name="White O."/>
            <person name="Tran B."/>
            <person name="Romero C."/>
            <person name="Forberger H.A."/>
            <person name="Weidman J.F."/>
            <person name="Khouri H.M."/>
            <person name="Feldblyum T.V."/>
            <person name="Utterback T.R."/>
            <person name="Van Aken S.E."/>
            <person name="Lovley D.R."/>
            <person name="Fraser C.M."/>
        </authorList>
    </citation>
    <scope>NUCLEOTIDE SEQUENCE [LARGE SCALE GENOMIC DNA]</scope>
    <source>
        <strain>ATCC 51573 / DSM 12127 / PCA</strain>
    </source>
</reference>
<feature type="chain" id="PRO_0000224482" description="Valine--tRNA ligase">
    <location>
        <begin position="1"/>
        <end position="887"/>
    </location>
</feature>
<feature type="coiled-coil region" evidence="1">
    <location>
        <begin position="817"/>
        <end position="885"/>
    </location>
</feature>
<feature type="short sequence motif" description="'HIGH' region">
    <location>
        <begin position="47"/>
        <end position="57"/>
    </location>
</feature>
<feature type="short sequence motif" description="'KMSKS' region">
    <location>
        <begin position="527"/>
        <end position="531"/>
    </location>
</feature>
<feature type="binding site" evidence="1">
    <location>
        <position position="530"/>
    </location>
    <ligand>
        <name>ATP</name>
        <dbReference type="ChEBI" id="CHEBI:30616"/>
    </ligand>
</feature>
<accession>Q74BJ6</accession>